<protein>
    <recommendedName>
        <fullName>Beta-Ala-His dipeptidase</fullName>
        <ecNumber evidence="2 3">3.4.13.20</ecNumber>
    </recommendedName>
    <alternativeName>
        <fullName>CNDP dipeptidase 1</fullName>
    </alternativeName>
    <alternativeName>
        <fullName>Carnosine dipeptidase 1</fullName>
    </alternativeName>
</protein>
<name>CNDP1_RAT</name>
<comment type="function">
    <text evidence="3">Catalyzes the peptide bond hydrolysis in Xaa-His dipeptides, displaying the highest activity toward carnosine (beta-alanyl-L-histidine) and anserine (beta-alanyl-3-methyl-histidine).</text>
</comment>
<comment type="catalytic activity">
    <reaction evidence="2 3">
        <text>Preferential hydrolysis of the beta-Ala-|-His dipeptide (carnosine), and also anserine, Xaa-|-His dipeptides and other dipeptides including homocarnosine.</text>
        <dbReference type="EC" id="3.4.13.20"/>
    </reaction>
</comment>
<comment type="catalytic activity">
    <reaction evidence="2 3">
        <text>carnosine + H2O = beta-alanine + L-histidine</text>
        <dbReference type="Rhea" id="RHEA:59360"/>
        <dbReference type="ChEBI" id="CHEBI:15377"/>
        <dbReference type="ChEBI" id="CHEBI:57485"/>
        <dbReference type="ChEBI" id="CHEBI:57595"/>
        <dbReference type="ChEBI" id="CHEBI:57966"/>
        <dbReference type="EC" id="3.4.13.20"/>
    </reaction>
    <physiologicalReaction direction="left-to-right" evidence="2">
        <dbReference type="Rhea" id="RHEA:59361"/>
    </physiologicalReaction>
</comment>
<comment type="catalytic activity">
    <reaction evidence="3">
        <text>anserine + H2O = N(pros)-methyl-L-histidine + beta-alanine</text>
        <dbReference type="Rhea" id="RHEA:59576"/>
        <dbReference type="ChEBI" id="CHEBI:15377"/>
        <dbReference type="ChEBI" id="CHEBI:57966"/>
        <dbReference type="ChEBI" id="CHEBI:58445"/>
        <dbReference type="ChEBI" id="CHEBI:143076"/>
        <dbReference type="EC" id="3.4.13.20"/>
    </reaction>
    <physiologicalReaction direction="left-to-right" evidence="3">
        <dbReference type="Rhea" id="RHEA:59577"/>
    </physiologicalReaction>
</comment>
<comment type="catalytic activity">
    <reaction evidence="3">
        <text>L-alanyl-L-histidine + H2O = L-histidine + L-alanine</text>
        <dbReference type="Rhea" id="RHEA:37283"/>
        <dbReference type="ChEBI" id="CHEBI:15377"/>
        <dbReference type="ChEBI" id="CHEBI:57595"/>
        <dbReference type="ChEBI" id="CHEBI:57972"/>
        <dbReference type="ChEBI" id="CHEBI:74388"/>
    </reaction>
    <physiologicalReaction direction="left-to-right" evidence="3">
        <dbReference type="Rhea" id="RHEA:37284"/>
    </physiologicalReaction>
</comment>
<comment type="catalytic activity">
    <reaction evidence="3">
        <text>glycyl-L-histidine + H2O = L-histidine + glycine</text>
        <dbReference type="Rhea" id="RHEA:67376"/>
        <dbReference type="ChEBI" id="CHEBI:15377"/>
        <dbReference type="ChEBI" id="CHEBI:57305"/>
        <dbReference type="ChEBI" id="CHEBI:57595"/>
        <dbReference type="ChEBI" id="CHEBI:169956"/>
    </reaction>
    <physiologicalReaction direction="left-to-right" evidence="3">
        <dbReference type="Rhea" id="RHEA:67377"/>
    </physiologicalReaction>
</comment>
<comment type="catalytic activity">
    <reaction evidence="3">
        <text>L-homocarnosine + H2O = 4-aminobutanoate + L-histidine</text>
        <dbReference type="Rhea" id="RHEA:59572"/>
        <dbReference type="ChEBI" id="CHEBI:15377"/>
        <dbReference type="ChEBI" id="CHEBI:57595"/>
        <dbReference type="ChEBI" id="CHEBI:59888"/>
        <dbReference type="ChEBI" id="CHEBI:143075"/>
        <dbReference type="EC" id="3.4.13.20"/>
    </reaction>
    <physiologicalReaction direction="left-to-right" evidence="3">
        <dbReference type="Rhea" id="RHEA:59573"/>
    </physiologicalReaction>
</comment>
<comment type="cofactor">
    <cofactor evidence="3">
        <name>Zn(2+)</name>
        <dbReference type="ChEBI" id="CHEBI:29105"/>
    </cofactor>
    <text evidence="3">Binds 2 Zn(2+) ions per subunit.</text>
</comment>
<comment type="subunit">
    <text evidence="3">Homodimer.</text>
</comment>
<comment type="subcellular location">
    <subcellularLocation>
        <location evidence="3">Secreted</location>
    </subcellularLocation>
</comment>
<comment type="tissue specificity">
    <text evidence="4">Detected exclusively in kidney.</text>
</comment>
<comment type="similarity">
    <text evidence="5">Belongs to the peptidase M20A family.</text>
</comment>
<comment type="caution">
    <text evidence="5">In contrast to human counterpart, it lacks a signal sequence.</text>
</comment>
<keyword id="KW-0121">Carboxypeptidase</keyword>
<keyword id="KW-0378">Hydrolase</keyword>
<keyword id="KW-0479">Metal-binding</keyword>
<keyword id="KW-0482">Metalloprotease</keyword>
<keyword id="KW-0597">Phosphoprotein</keyword>
<keyword id="KW-0645">Protease</keyword>
<keyword id="KW-1185">Reference proteome</keyword>
<keyword id="KW-0964">Secreted</keyword>
<keyword id="KW-0862">Zinc</keyword>
<gene>
    <name type="primary">Cndp1</name>
    <name type="synonym">Cn1</name>
</gene>
<dbReference type="EC" id="3.4.13.20" evidence="2 3"/>
<dbReference type="EMBL" id="BC081877">
    <property type="protein sequence ID" value="AAH81877.1"/>
    <property type="molecule type" value="mRNA"/>
</dbReference>
<dbReference type="RefSeq" id="NP_001007688.1">
    <property type="nucleotide sequence ID" value="NM_001007687.2"/>
</dbReference>
<dbReference type="RefSeq" id="XP_006255071.1">
    <property type="nucleotide sequence ID" value="XM_006255009.3"/>
</dbReference>
<dbReference type="RefSeq" id="XP_008770357.1">
    <property type="nucleotide sequence ID" value="XM_008772135.4"/>
</dbReference>
<dbReference type="SMR" id="Q66HG3"/>
<dbReference type="FunCoup" id="Q66HG3">
    <property type="interactions" value="8"/>
</dbReference>
<dbReference type="STRING" id="10116.ENSRNOP00000034652"/>
<dbReference type="MEROPS" id="M20.006"/>
<dbReference type="iPTMnet" id="Q66HG3"/>
<dbReference type="PhosphoSitePlus" id="Q66HG3"/>
<dbReference type="PaxDb" id="10116-ENSRNOP00000034652"/>
<dbReference type="Ensembl" id="ENSRNOT00000034970.6">
    <property type="protein sequence ID" value="ENSRNOP00000034652.3"/>
    <property type="gene ID" value="ENSRNOG00000027739.7"/>
</dbReference>
<dbReference type="GeneID" id="307212"/>
<dbReference type="KEGG" id="rno:307212"/>
<dbReference type="AGR" id="RGD:1359493"/>
<dbReference type="CTD" id="84735"/>
<dbReference type="RGD" id="1359493">
    <property type="gene designation" value="Cndp1"/>
</dbReference>
<dbReference type="eggNOG" id="KOG2276">
    <property type="taxonomic scope" value="Eukaryota"/>
</dbReference>
<dbReference type="GeneTree" id="ENSGT00940000160484"/>
<dbReference type="HOGENOM" id="CLU_029469_3_1_1"/>
<dbReference type="InParanoid" id="Q66HG3"/>
<dbReference type="OMA" id="CKGNIVM"/>
<dbReference type="OrthoDB" id="23432at9989"/>
<dbReference type="PhylomeDB" id="Q66HG3"/>
<dbReference type="TreeFam" id="TF300633"/>
<dbReference type="PRO" id="PR:Q66HG3"/>
<dbReference type="Proteomes" id="UP000002494">
    <property type="component" value="Chromosome 18"/>
</dbReference>
<dbReference type="Bgee" id="ENSRNOG00000027739">
    <property type="expression patterns" value="Expressed in adult mammalian kidney and 17 other cell types or tissues"/>
</dbReference>
<dbReference type="GO" id="GO:0005829">
    <property type="term" value="C:cytosol"/>
    <property type="evidence" value="ECO:0000266"/>
    <property type="project" value="RGD"/>
</dbReference>
<dbReference type="GO" id="GO:0005576">
    <property type="term" value="C:extracellular region"/>
    <property type="evidence" value="ECO:0007669"/>
    <property type="project" value="UniProtKB-SubCell"/>
</dbReference>
<dbReference type="GO" id="GO:0004180">
    <property type="term" value="F:carboxypeptidase activity"/>
    <property type="evidence" value="ECO:0007669"/>
    <property type="project" value="UniProtKB-KW"/>
</dbReference>
<dbReference type="GO" id="GO:0016805">
    <property type="term" value="F:dipeptidase activity"/>
    <property type="evidence" value="ECO:0000266"/>
    <property type="project" value="RGD"/>
</dbReference>
<dbReference type="GO" id="GO:0046872">
    <property type="term" value="F:metal ion binding"/>
    <property type="evidence" value="ECO:0007669"/>
    <property type="project" value="UniProtKB-KW"/>
</dbReference>
<dbReference type="GO" id="GO:0070573">
    <property type="term" value="F:metallodipeptidase activity"/>
    <property type="evidence" value="ECO:0007669"/>
    <property type="project" value="InterPro"/>
</dbReference>
<dbReference type="GO" id="GO:0006508">
    <property type="term" value="P:proteolysis"/>
    <property type="evidence" value="ECO:0000266"/>
    <property type="project" value="RGD"/>
</dbReference>
<dbReference type="GO" id="GO:0051246">
    <property type="term" value="P:regulation of protein metabolic process"/>
    <property type="evidence" value="ECO:0000266"/>
    <property type="project" value="RGD"/>
</dbReference>
<dbReference type="CDD" id="cd05676">
    <property type="entry name" value="M20_dipept_like_CNDP"/>
    <property type="match status" value="1"/>
</dbReference>
<dbReference type="FunFam" id="3.30.70.360:FF:000008">
    <property type="entry name" value="Cytosolic non-specific dipeptidase"/>
    <property type="match status" value="1"/>
</dbReference>
<dbReference type="FunFam" id="3.40.630.10:FF:000014">
    <property type="entry name" value="Cytosolic non-specific dipeptidase"/>
    <property type="match status" value="1"/>
</dbReference>
<dbReference type="Gene3D" id="3.30.70.360">
    <property type="match status" value="1"/>
</dbReference>
<dbReference type="Gene3D" id="3.40.630.10">
    <property type="entry name" value="Zn peptidases"/>
    <property type="match status" value="1"/>
</dbReference>
<dbReference type="InterPro" id="IPR001261">
    <property type="entry name" value="ArgE/DapE_CS"/>
</dbReference>
<dbReference type="InterPro" id="IPR017153">
    <property type="entry name" value="CNDP/DUG1"/>
</dbReference>
<dbReference type="InterPro" id="IPR051458">
    <property type="entry name" value="Cyt/Met_Dipeptidase"/>
</dbReference>
<dbReference type="InterPro" id="IPR002933">
    <property type="entry name" value="Peptidase_M20"/>
</dbReference>
<dbReference type="InterPro" id="IPR011650">
    <property type="entry name" value="Peptidase_M20_dimer"/>
</dbReference>
<dbReference type="PANTHER" id="PTHR43270">
    <property type="entry name" value="BETA-ALA-HIS DIPEPTIDASE"/>
    <property type="match status" value="1"/>
</dbReference>
<dbReference type="PANTHER" id="PTHR43270:SF1">
    <property type="entry name" value="BETA-ALA-HIS DIPEPTIDASE"/>
    <property type="match status" value="1"/>
</dbReference>
<dbReference type="Pfam" id="PF07687">
    <property type="entry name" value="M20_dimer"/>
    <property type="match status" value="1"/>
</dbReference>
<dbReference type="Pfam" id="PF01546">
    <property type="entry name" value="Peptidase_M20"/>
    <property type="match status" value="1"/>
</dbReference>
<dbReference type="PIRSF" id="PIRSF037242">
    <property type="entry name" value="CNDP_dipeptidase"/>
    <property type="match status" value="1"/>
</dbReference>
<dbReference type="SUPFAM" id="SSF53187">
    <property type="entry name" value="Zn-dependent exopeptidases"/>
    <property type="match status" value="1"/>
</dbReference>
<dbReference type="PROSITE" id="PS00759">
    <property type="entry name" value="ARGE_DAPE_CPG2_2"/>
    <property type="match status" value="1"/>
</dbReference>
<reference key="1">
    <citation type="journal article" date="2004" name="Genome Res.">
        <title>The status, quality, and expansion of the NIH full-length cDNA project: the Mammalian Gene Collection (MGC).</title>
        <authorList>
            <consortium name="The MGC Project Team"/>
        </authorList>
    </citation>
    <scope>NUCLEOTIDE SEQUENCE [LARGE SCALE MRNA]</scope>
    <source>
        <tissue>Kidney</tissue>
    </source>
</reference>
<reference key="2">
    <citation type="journal article" date="2003" name="J. Biol. Chem.">
        <title>Sequence identification and characterization of human carnosinase and a closely related non-specific dipeptidase.</title>
        <authorList>
            <person name="Teufel M."/>
            <person name="Saudek V."/>
            <person name="Ledig J.P."/>
            <person name="Bernhardt A."/>
            <person name="Boularand S."/>
            <person name="Carreau A."/>
            <person name="Cairns N.J."/>
            <person name="Carter C."/>
            <person name="Cowley D.J."/>
            <person name="Duverger D."/>
            <person name="Ganzhorn A.J."/>
            <person name="Guenet C."/>
            <person name="Heintzelmann B."/>
            <person name="Laucher V."/>
            <person name="Sauvage C."/>
            <person name="Smirnova T."/>
        </authorList>
    </citation>
    <scope>TISSUE SPECIFICITY</scope>
</reference>
<reference key="3">
    <citation type="journal article" date="2006" name="Proc. Natl. Acad. Sci. U.S.A.">
        <title>Quantitative phosphoproteomics of vasopressin-sensitive renal cells: regulation of aquaporin-2 phosphorylation at two sites.</title>
        <authorList>
            <person name="Hoffert J.D."/>
            <person name="Pisitkun T."/>
            <person name="Wang G."/>
            <person name="Shen R.-F."/>
            <person name="Knepper M.A."/>
        </authorList>
    </citation>
    <scope>PHOSPHORYLATION [LARGE SCALE ANALYSIS] AT SER-194</scope>
    <scope>IDENTIFICATION BY MASS SPECTROMETRY [LARGE SCALE ANALYSIS]</scope>
</reference>
<organism>
    <name type="scientific">Rattus norvegicus</name>
    <name type="common">Rat</name>
    <dbReference type="NCBI Taxonomy" id="10116"/>
    <lineage>
        <taxon>Eukaryota</taxon>
        <taxon>Metazoa</taxon>
        <taxon>Chordata</taxon>
        <taxon>Craniata</taxon>
        <taxon>Vertebrata</taxon>
        <taxon>Euteleostomi</taxon>
        <taxon>Mammalia</taxon>
        <taxon>Eutheria</taxon>
        <taxon>Euarchontoglires</taxon>
        <taxon>Glires</taxon>
        <taxon>Rodentia</taxon>
        <taxon>Myomorpha</taxon>
        <taxon>Muroidea</taxon>
        <taxon>Muridae</taxon>
        <taxon>Murinae</taxon>
        <taxon>Rattus</taxon>
    </lineage>
</organism>
<sequence>MLSPPHSGTLEKLFQYIDLHQDEFVQTLKEWVAIESDSVQPMPRLRQELFRMMALAADKLRNLGARVDSVDLGSQQMPDGQSLPTPPIILAELGNDPKKPSVCFYGHLDVQPAQKEDGWLTDPYTLTEVDGKLYGRGATDNKGPVLAWINAVSTFRALQQDLPVNVKFILEGMEEAGSVALEELVKREKDNFFSGVDYIVISDNLWLSQKKPALTCGTRGNCYFTVEVKCRDQDFHSGTFGGILNEPMADLVALLGSLVDSSGHILVPGIYDQMAPITEEEKTMYENIDLDLEEYQKSSRVERFLFDTKEELLTHLWRYPSLSIHGIEGAFDEPGTKTVIPGRVLGKFSIRLVPHMTPSVVETQVTQHLEAVFSKRNSFNKMAVSMVLGLQPWTANINGTQYLAARRAIQTVFGVDPDMIQDGSTIPIAKIFQDITQKSVMMLPLGAVDDGEHSQNEKINRWNYIQGSKLFAAFFLELSKLHSGQQVPSGAF</sequence>
<evidence type="ECO:0000250" key="1"/>
<evidence type="ECO:0000250" key="2">
    <source>
        <dbReference type="UniProtKB" id="Q8BUG2"/>
    </source>
</evidence>
<evidence type="ECO:0000250" key="3">
    <source>
        <dbReference type="UniProtKB" id="Q96KN2"/>
    </source>
</evidence>
<evidence type="ECO:0000269" key="4">
    <source>
    </source>
</evidence>
<evidence type="ECO:0000305" key="5"/>
<evidence type="ECO:0007744" key="6">
    <source>
    </source>
</evidence>
<feature type="chain" id="PRO_0000250531" description="Beta-Ala-His dipeptidase">
    <location>
        <begin position="1"/>
        <end position="492"/>
    </location>
</feature>
<feature type="active site" evidence="1">
    <location>
        <position position="109"/>
    </location>
</feature>
<feature type="active site" description="Proton acceptor" evidence="1">
    <location>
        <position position="174"/>
    </location>
</feature>
<feature type="binding site" evidence="3">
    <location>
        <position position="107"/>
    </location>
    <ligand>
        <name>Zn(2+)</name>
        <dbReference type="ChEBI" id="CHEBI:29105"/>
        <label>2</label>
    </ligand>
</feature>
<feature type="binding site" evidence="3">
    <location>
        <position position="140"/>
    </location>
    <ligand>
        <name>Zn(2+)</name>
        <dbReference type="ChEBI" id="CHEBI:29105"/>
        <label>1</label>
    </ligand>
</feature>
<feature type="binding site" evidence="3">
    <location>
        <position position="140"/>
    </location>
    <ligand>
        <name>Zn(2+)</name>
        <dbReference type="ChEBI" id="CHEBI:29105"/>
        <label>2</label>
    </ligand>
</feature>
<feature type="binding site" evidence="3">
    <location>
        <position position="175"/>
    </location>
    <ligand>
        <name>Zn(2+)</name>
        <dbReference type="ChEBI" id="CHEBI:29105"/>
        <label>1</label>
    </ligand>
</feature>
<feature type="binding site" evidence="3">
    <location>
        <position position="203"/>
    </location>
    <ligand>
        <name>Zn(2+)</name>
        <dbReference type="ChEBI" id="CHEBI:29105"/>
        <label>2</label>
    </ligand>
</feature>
<feature type="binding site" evidence="3">
    <location>
        <position position="453"/>
    </location>
    <ligand>
        <name>Zn(2+)</name>
        <dbReference type="ChEBI" id="CHEBI:29105"/>
        <label>1</label>
    </ligand>
</feature>
<feature type="modified residue" description="Phosphoserine" evidence="6">
    <location>
        <position position="194"/>
    </location>
</feature>
<accession>Q66HG3</accession>
<proteinExistence type="evidence at protein level"/>